<sequence length="180" mass="20235">MSEEVKEQNLPEVEPVQEAASDSVNLDALGDISKVEKLEKELGEITDKYYRANAEFENIKKRYEKEKADVASYANEKFARDLLPVIDALEIAANFDPEDDEFAKKIKEGILITINQFKKCFEKHGVSEIATDADFDPNVHNAVLRVDSEEKQSGQIVQALQKGYMINGRVLRPAMVSVAN</sequence>
<comment type="function">
    <text evidence="1">Participates actively in the response to hyperosmotic and heat shock by preventing the aggregation of stress-denatured proteins, in association with DnaK and GrpE. It is the nucleotide exchange factor for DnaK and may function as a thermosensor. Unfolded proteins bind initially to DnaJ; upon interaction with the DnaJ-bound protein, DnaK hydrolyzes its bound ATP, resulting in the formation of a stable complex. GrpE releases ADP from DnaK; ATP binding to DnaK triggers the release of the substrate protein, thus completing the reaction cycle. Several rounds of ATP-dependent interactions between DnaJ, DnaK and GrpE are required for fully efficient folding.</text>
</comment>
<comment type="subunit">
    <text evidence="1">Homodimer.</text>
</comment>
<comment type="subcellular location">
    <subcellularLocation>
        <location evidence="1">Cytoplasm</location>
    </subcellularLocation>
</comment>
<comment type="similarity">
    <text evidence="1">Belongs to the GrpE family.</text>
</comment>
<accession>A7ZEB6</accession>
<reference key="1">
    <citation type="submission" date="2007-10" db="EMBL/GenBank/DDBJ databases">
        <title>Genome sequence of Campylobacter concisus 13826 isolated from human feces.</title>
        <authorList>
            <person name="Fouts D.E."/>
            <person name="Mongodin E.F."/>
            <person name="Puiu D."/>
            <person name="Sebastian Y."/>
            <person name="Miller W.G."/>
            <person name="Mandrell R.E."/>
            <person name="On S."/>
            <person name="Nelson K.E."/>
        </authorList>
    </citation>
    <scope>NUCLEOTIDE SEQUENCE [LARGE SCALE GENOMIC DNA]</scope>
    <source>
        <strain>13826</strain>
    </source>
</reference>
<dbReference type="EMBL" id="CP000792">
    <property type="protein sequence ID" value="EAT98747.1"/>
    <property type="molecule type" value="Genomic_DNA"/>
</dbReference>
<dbReference type="RefSeq" id="WP_012140036.1">
    <property type="nucleotide sequence ID" value="NC_009802.2"/>
</dbReference>
<dbReference type="SMR" id="A7ZEB6"/>
<dbReference type="STRING" id="360104.CCC13826_2045"/>
<dbReference type="KEGG" id="cco:CCC13826_2045"/>
<dbReference type="eggNOG" id="COG0576">
    <property type="taxonomic scope" value="Bacteria"/>
</dbReference>
<dbReference type="HOGENOM" id="CLU_057217_6_3_7"/>
<dbReference type="OrthoDB" id="9789811at2"/>
<dbReference type="Proteomes" id="UP000001121">
    <property type="component" value="Chromosome"/>
</dbReference>
<dbReference type="GO" id="GO:0005829">
    <property type="term" value="C:cytosol"/>
    <property type="evidence" value="ECO:0007669"/>
    <property type="project" value="TreeGrafter"/>
</dbReference>
<dbReference type="GO" id="GO:0000774">
    <property type="term" value="F:adenyl-nucleotide exchange factor activity"/>
    <property type="evidence" value="ECO:0007669"/>
    <property type="project" value="InterPro"/>
</dbReference>
<dbReference type="GO" id="GO:0042803">
    <property type="term" value="F:protein homodimerization activity"/>
    <property type="evidence" value="ECO:0007669"/>
    <property type="project" value="InterPro"/>
</dbReference>
<dbReference type="GO" id="GO:0051087">
    <property type="term" value="F:protein-folding chaperone binding"/>
    <property type="evidence" value="ECO:0007669"/>
    <property type="project" value="InterPro"/>
</dbReference>
<dbReference type="GO" id="GO:0051082">
    <property type="term" value="F:unfolded protein binding"/>
    <property type="evidence" value="ECO:0007669"/>
    <property type="project" value="TreeGrafter"/>
</dbReference>
<dbReference type="GO" id="GO:0006457">
    <property type="term" value="P:protein folding"/>
    <property type="evidence" value="ECO:0007669"/>
    <property type="project" value="InterPro"/>
</dbReference>
<dbReference type="CDD" id="cd00446">
    <property type="entry name" value="GrpE"/>
    <property type="match status" value="1"/>
</dbReference>
<dbReference type="FunFam" id="2.30.22.10:FF:000001">
    <property type="entry name" value="Protein GrpE"/>
    <property type="match status" value="1"/>
</dbReference>
<dbReference type="Gene3D" id="3.90.20.20">
    <property type="match status" value="1"/>
</dbReference>
<dbReference type="Gene3D" id="2.30.22.10">
    <property type="entry name" value="Head domain of nucleotide exchange factor GrpE"/>
    <property type="match status" value="1"/>
</dbReference>
<dbReference type="HAMAP" id="MF_01151">
    <property type="entry name" value="GrpE"/>
    <property type="match status" value="1"/>
</dbReference>
<dbReference type="InterPro" id="IPR000740">
    <property type="entry name" value="GrpE"/>
</dbReference>
<dbReference type="InterPro" id="IPR013805">
    <property type="entry name" value="GrpE_coiled_coil"/>
</dbReference>
<dbReference type="InterPro" id="IPR009012">
    <property type="entry name" value="GrpE_head"/>
</dbReference>
<dbReference type="NCBIfam" id="NF010738">
    <property type="entry name" value="PRK14140.1"/>
    <property type="match status" value="1"/>
</dbReference>
<dbReference type="NCBIfam" id="NF010756">
    <property type="entry name" value="PRK14159.1"/>
    <property type="match status" value="1"/>
</dbReference>
<dbReference type="PANTHER" id="PTHR21237">
    <property type="entry name" value="GRPE PROTEIN"/>
    <property type="match status" value="1"/>
</dbReference>
<dbReference type="PANTHER" id="PTHR21237:SF23">
    <property type="entry name" value="GRPE PROTEIN HOMOLOG, MITOCHONDRIAL"/>
    <property type="match status" value="1"/>
</dbReference>
<dbReference type="Pfam" id="PF01025">
    <property type="entry name" value="GrpE"/>
    <property type="match status" value="1"/>
</dbReference>
<dbReference type="PRINTS" id="PR00773">
    <property type="entry name" value="GRPEPROTEIN"/>
</dbReference>
<dbReference type="SUPFAM" id="SSF58014">
    <property type="entry name" value="Coiled-coil domain of nucleotide exchange factor GrpE"/>
    <property type="match status" value="1"/>
</dbReference>
<dbReference type="SUPFAM" id="SSF51064">
    <property type="entry name" value="Head domain of nucleotide exchange factor GrpE"/>
    <property type="match status" value="1"/>
</dbReference>
<dbReference type="PROSITE" id="PS01071">
    <property type="entry name" value="GRPE"/>
    <property type="match status" value="1"/>
</dbReference>
<protein>
    <recommendedName>
        <fullName evidence="1">Protein GrpE</fullName>
    </recommendedName>
    <alternativeName>
        <fullName evidence="1">HSP-70 cofactor</fullName>
    </alternativeName>
</protein>
<proteinExistence type="inferred from homology"/>
<organism>
    <name type="scientific">Campylobacter concisus (strain 13826)</name>
    <dbReference type="NCBI Taxonomy" id="360104"/>
    <lineage>
        <taxon>Bacteria</taxon>
        <taxon>Pseudomonadati</taxon>
        <taxon>Campylobacterota</taxon>
        <taxon>Epsilonproteobacteria</taxon>
        <taxon>Campylobacterales</taxon>
        <taxon>Campylobacteraceae</taxon>
        <taxon>Campylobacter</taxon>
    </lineage>
</organism>
<feature type="chain" id="PRO_1000164181" description="Protein GrpE">
    <location>
        <begin position="1"/>
        <end position="180"/>
    </location>
</feature>
<feature type="region of interest" description="Disordered" evidence="2">
    <location>
        <begin position="1"/>
        <end position="21"/>
    </location>
</feature>
<name>GRPE_CAMC1</name>
<evidence type="ECO:0000255" key="1">
    <source>
        <dbReference type="HAMAP-Rule" id="MF_01151"/>
    </source>
</evidence>
<evidence type="ECO:0000256" key="2">
    <source>
        <dbReference type="SAM" id="MobiDB-lite"/>
    </source>
</evidence>
<keyword id="KW-0143">Chaperone</keyword>
<keyword id="KW-0963">Cytoplasm</keyword>
<keyword id="KW-0346">Stress response</keyword>
<gene>
    <name evidence="1" type="primary">grpE</name>
    <name type="ordered locus">Ccon26_12710</name>
    <name type="ORF">CCC13826_2045</name>
</gene>